<dbReference type="EMBL" id="FM242711">
    <property type="protein sequence ID" value="CAS06407.1"/>
    <property type="molecule type" value="Genomic_DNA"/>
</dbReference>
<dbReference type="RefSeq" id="WP_003724987.1">
    <property type="nucleotide sequence ID" value="NC_012488.1"/>
</dbReference>
<dbReference type="SMR" id="C1KZN4"/>
<dbReference type="KEGG" id="lmc:Lm4b_02653"/>
<dbReference type="HOGENOM" id="CLU_077094_2_0_9"/>
<dbReference type="GO" id="GO:0005886">
    <property type="term" value="C:plasma membrane"/>
    <property type="evidence" value="ECO:0007669"/>
    <property type="project" value="UniProtKB-SubCell"/>
</dbReference>
<dbReference type="GO" id="GO:0005524">
    <property type="term" value="F:ATP binding"/>
    <property type="evidence" value="ECO:0007669"/>
    <property type="project" value="UniProtKB-UniRule"/>
</dbReference>
<dbReference type="GO" id="GO:0008556">
    <property type="term" value="F:P-type potassium transmembrane transporter activity"/>
    <property type="evidence" value="ECO:0007669"/>
    <property type="project" value="InterPro"/>
</dbReference>
<dbReference type="HAMAP" id="MF_00276">
    <property type="entry name" value="KdpC"/>
    <property type="match status" value="1"/>
</dbReference>
<dbReference type="InterPro" id="IPR003820">
    <property type="entry name" value="KdpC"/>
</dbReference>
<dbReference type="NCBIfam" id="TIGR00681">
    <property type="entry name" value="kdpC"/>
    <property type="match status" value="1"/>
</dbReference>
<dbReference type="PANTHER" id="PTHR30042">
    <property type="entry name" value="POTASSIUM-TRANSPORTING ATPASE C CHAIN"/>
    <property type="match status" value="1"/>
</dbReference>
<dbReference type="PANTHER" id="PTHR30042:SF2">
    <property type="entry name" value="POTASSIUM-TRANSPORTING ATPASE KDPC SUBUNIT"/>
    <property type="match status" value="1"/>
</dbReference>
<dbReference type="Pfam" id="PF02669">
    <property type="entry name" value="KdpC"/>
    <property type="match status" value="1"/>
</dbReference>
<dbReference type="PIRSF" id="PIRSF001296">
    <property type="entry name" value="K_ATPase_KdpC"/>
    <property type="match status" value="1"/>
</dbReference>
<organism>
    <name type="scientific">Listeria monocytogenes serotype 4b (strain CLIP80459)</name>
    <dbReference type="NCBI Taxonomy" id="568819"/>
    <lineage>
        <taxon>Bacteria</taxon>
        <taxon>Bacillati</taxon>
        <taxon>Bacillota</taxon>
        <taxon>Bacilli</taxon>
        <taxon>Bacillales</taxon>
        <taxon>Listeriaceae</taxon>
        <taxon>Listeria</taxon>
    </lineage>
</organism>
<evidence type="ECO:0000255" key="1">
    <source>
        <dbReference type="HAMAP-Rule" id="MF_00276"/>
    </source>
</evidence>
<keyword id="KW-0067">ATP-binding</keyword>
<keyword id="KW-1003">Cell membrane</keyword>
<keyword id="KW-0406">Ion transport</keyword>
<keyword id="KW-0472">Membrane</keyword>
<keyword id="KW-0547">Nucleotide-binding</keyword>
<keyword id="KW-0630">Potassium</keyword>
<keyword id="KW-0633">Potassium transport</keyword>
<keyword id="KW-0812">Transmembrane</keyword>
<keyword id="KW-1133">Transmembrane helix</keyword>
<keyword id="KW-0813">Transport</keyword>
<comment type="function">
    <text evidence="1">Part of the high-affinity ATP-driven potassium transport (or Kdp) system, which catalyzes the hydrolysis of ATP coupled with the electrogenic transport of potassium into the cytoplasm. This subunit acts as a catalytic chaperone that increases the ATP-binding affinity of the ATP-hydrolyzing subunit KdpB by the formation of a transient KdpB/KdpC/ATP ternary complex.</text>
</comment>
<comment type="subunit">
    <text evidence="1">The system is composed of three essential subunits: KdpA, KdpB and KdpC.</text>
</comment>
<comment type="subcellular location">
    <subcellularLocation>
        <location evidence="1">Cell membrane</location>
        <topology evidence="1">Single-pass membrane protein</topology>
    </subcellularLocation>
</comment>
<comment type="similarity">
    <text evidence="1">Belongs to the KdpC family.</text>
</comment>
<accession>C1KZN4</accession>
<reference key="1">
    <citation type="journal article" date="2012" name="BMC Genomics">
        <title>Comparative genomics and transcriptomics of lineages I, II, and III strains of Listeria monocytogenes.</title>
        <authorList>
            <person name="Hain T."/>
            <person name="Ghai R."/>
            <person name="Billion A."/>
            <person name="Kuenne C.T."/>
            <person name="Steinweg C."/>
            <person name="Izar B."/>
            <person name="Mohamed W."/>
            <person name="Mraheil M."/>
            <person name="Domann E."/>
            <person name="Schaffrath S."/>
            <person name="Karst U."/>
            <person name="Goesmann A."/>
            <person name="Oehm S."/>
            <person name="Puhler A."/>
            <person name="Merkl R."/>
            <person name="Vorwerk S."/>
            <person name="Glaser P."/>
            <person name="Garrido P."/>
            <person name="Rusniok C."/>
            <person name="Buchrieser C."/>
            <person name="Goebel W."/>
            <person name="Chakraborty T."/>
        </authorList>
    </citation>
    <scope>NUCLEOTIDE SEQUENCE [LARGE SCALE GENOMIC DNA]</scope>
    <source>
        <strain>CLIP80459</strain>
    </source>
</reference>
<feature type="chain" id="PRO_1000204795" description="Potassium-transporting ATPase KdpC subunit">
    <location>
        <begin position="1"/>
        <end position="190"/>
    </location>
</feature>
<feature type="transmembrane region" description="Helical" evidence="1">
    <location>
        <begin position="13"/>
        <end position="33"/>
    </location>
</feature>
<sequence length="190" mass="20868">MKRFMQIWKPAVVGFLLLTLMCGVVYPGIVTIFASAAFHDKANGSIIEEKRADGTTGKVGSAEIGQTFTKPEYLIGRAASDGVATNLNPTSEEQKQLVEKRIAWWHKLDPTNNRVIPMDLVTASASGVDPDISEAAAAYQVDRISRERGISTKQVKEIIAEHTSDRLLGFWGEPTVNVLQVNLALDRLKM</sequence>
<protein>
    <recommendedName>
        <fullName evidence="1">Potassium-transporting ATPase KdpC subunit</fullName>
    </recommendedName>
    <alternativeName>
        <fullName evidence="1">ATP phosphohydrolase [potassium-transporting] C chain</fullName>
    </alternativeName>
    <alternativeName>
        <fullName evidence="1">Potassium-binding and translocating subunit C</fullName>
    </alternativeName>
    <alternativeName>
        <fullName evidence="1">Potassium-translocating ATPase C chain</fullName>
    </alternativeName>
</protein>
<name>KDPC_LISMC</name>
<proteinExistence type="inferred from homology"/>
<gene>
    <name evidence="1" type="primary">kdpC</name>
    <name type="ordered locus">Lm4b_02653</name>
</gene>